<evidence type="ECO:0000255" key="1">
    <source>
        <dbReference type="HAMAP-Rule" id="MF_00462"/>
    </source>
</evidence>
<dbReference type="EC" id="7.-.-.-" evidence="1"/>
<dbReference type="EMBL" id="AE013218">
    <property type="protein sequence ID" value="AAM67677.1"/>
    <property type="molecule type" value="Genomic_DNA"/>
</dbReference>
<dbReference type="SMR" id="Q8KA19"/>
<dbReference type="STRING" id="198804.BUsg_108"/>
<dbReference type="KEGG" id="bas:BUsg_108"/>
<dbReference type="eggNOG" id="COG4658">
    <property type="taxonomic scope" value="Bacteria"/>
</dbReference>
<dbReference type="HOGENOM" id="CLU_042020_0_0_6"/>
<dbReference type="Proteomes" id="UP000000416">
    <property type="component" value="Chromosome"/>
</dbReference>
<dbReference type="GO" id="GO:0005886">
    <property type="term" value="C:plasma membrane"/>
    <property type="evidence" value="ECO:0007669"/>
    <property type="project" value="UniProtKB-SubCell"/>
</dbReference>
<dbReference type="GO" id="GO:0022900">
    <property type="term" value="P:electron transport chain"/>
    <property type="evidence" value="ECO:0007669"/>
    <property type="project" value="UniProtKB-UniRule"/>
</dbReference>
<dbReference type="GO" id="GO:0055085">
    <property type="term" value="P:transmembrane transport"/>
    <property type="evidence" value="ECO:0007669"/>
    <property type="project" value="InterPro"/>
</dbReference>
<dbReference type="HAMAP" id="MF_00462">
    <property type="entry name" value="RsxD_RnfD"/>
    <property type="match status" value="1"/>
</dbReference>
<dbReference type="InterPro" id="IPR004338">
    <property type="entry name" value="NqrB/RnfD"/>
</dbReference>
<dbReference type="InterPro" id="IPR011303">
    <property type="entry name" value="RnfD_bac"/>
</dbReference>
<dbReference type="NCBIfam" id="TIGR01946">
    <property type="entry name" value="rnfD"/>
    <property type="match status" value="1"/>
</dbReference>
<dbReference type="PANTHER" id="PTHR30578">
    <property type="entry name" value="ELECTRON TRANSPORT COMPLEX PROTEIN RNFD"/>
    <property type="match status" value="1"/>
</dbReference>
<dbReference type="PANTHER" id="PTHR30578:SF0">
    <property type="entry name" value="ION-TRANSLOCATING OXIDOREDUCTASE COMPLEX SUBUNIT D"/>
    <property type="match status" value="1"/>
</dbReference>
<dbReference type="Pfam" id="PF03116">
    <property type="entry name" value="NQR2_RnfD_RnfE"/>
    <property type="match status" value="1"/>
</dbReference>
<proteinExistence type="inferred from homology"/>
<protein>
    <recommendedName>
        <fullName evidence="1">Ion-translocating oxidoreductase complex subunit D</fullName>
        <ecNumber evidence="1">7.-.-.-</ecNumber>
    </recommendedName>
    <alternativeName>
        <fullName evidence="1">Rnf electron transport complex subunit D</fullName>
    </alternativeName>
</protein>
<sequence>MKLKKMNLPYISNTYDVRKIMFLVVLSCIPGLCTEIYFFGCGVLIQTLLFVIISLLFEIIILKMRRKNIKNSLFDYSSFLTAVLLGLSTPCALPWWMIIFSCFFAIVISKYLYGGLGQNIFNPAMIGYVVLLISFPVHMTAWNEKNSSLSFYNDIKKSINLILFYNKLNNSKKKICPDNFTEATPLDDFKTKSHFDYDFFPEESAVKKKTKIVSIAWKYINISFLIGGCFLLYKKVICWRIPLSFLSSLIFFSSITYFYSQKFFCSPLFHLFSGGTMMCAFFIATDPVTTSCTKIGKIFFGLIIGFLVWIIRNYSDYPDGIAFSVLFANMIVPLMDAYLKTSGYGHKNL</sequence>
<accession>Q8KA19</accession>
<gene>
    <name evidence="1" type="primary">rnfD</name>
    <name type="ordered locus">BUsg_108</name>
</gene>
<name>RNFD_BUCAP</name>
<feature type="chain" id="PRO_0000074451" description="Ion-translocating oxidoreductase complex subunit D">
    <location>
        <begin position="1"/>
        <end position="349"/>
    </location>
</feature>
<feature type="transmembrane region" description="Helical" evidence="1">
    <location>
        <begin position="20"/>
        <end position="40"/>
    </location>
</feature>
<feature type="transmembrane region" description="Helical" evidence="1">
    <location>
        <begin position="42"/>
        <end position="62"/>
    </location>
</feature>
<feature type="transmembrane region" description="Helical" evidence="1">
    <location>
        <begin position="83"/>
        <end position="105"/>
    </location>
</feature>
<feature type="transmembrane region" description="Helical" evidence="1">
    <location>
        <begin position="120"/>
        <end position="140"/>
    </location>
</feature>
<feature type="transmembrane region" description="Helical" evidence="1">
    <location>
        <begin position="212"/>
        <end position="232"/>
    </location>
</feature>
<feature type="transmembrane region" description="Helical" evidence="1">
    <location>
        <begin position="236"/>
        <end position="256"/>
    </location>
</feature>
<feature type="transmembrane region" description="Helical" evidence="1">
    <location>
        <begin position="263"/>
        <end position="283"/>
    </location>
</feature>
<feature type="transmembrane region" description="Helical" evidence="1">
    <location>
        <begin position="291"/>
        <end position="311"/>
    </location>
</feature>
<feature type="transmembrane region" description="Helical" evidence="1">
    <location>
        <begin position="319"/>
        <end position="339"/>
    </location>
</feature>
<feature type="modified residue" description="FMN phosphoryl threonine" evidence="1">
    <location>
        <position position="184"/>
    </location>
</feature>
<comment type="function">
    <text evidence="1">Part of a membrane-bound complex that couples electron transfer with translocation of ions across the membrane.</text>
</comment>
<comment type="cofactor">
    <cofactor evidence="1">
        <name>FMN</name>
        <dbReference type="ChEBI" id="CHEBI:58210"/>
    </cofactor>
</comment>
<comment type="subunit">
    <text evidence="1">The complex is composed of six subunits: RnfA, RnfB, RnfC, RnfD, RnfE and RnfG.</text>
</comment>
<comment type="subcellular location">
    <subcellularLocation>
        <location evidence="1">Cell inner membrane</location>
        <topology evidence="1">Multi-pass membrane protein</topology>
    </subcellularLocation>
</comment>
<comment type="similarity">
    <text evidence="1">Belongs to the NqrB/RnfD family.</text>
</comment>
<organism>
    <name type="scientific">Buchnera aphidicola subsp. Schizaphis graminum (strain Sg)</name>
    <dbReference type="NCBI Taxonomy" id="198804"/>
    <lineage>
        <taxon>Bacteria</taxon>
        <taxon>Pseudomonadati</taxon>
        <taxon>Pseudomonadota</taxon>
        <taxon>Gammaproteobacteria</taxon>
        <taxon>Enterobacterales</taxon>
        <taxon>Erwiniaceae</taxon>
        <taxon>Buchnera</taxon>
    </lineage>
</organism>
<reference key="1">
    <citation type="journal article" date="2002" name="Science">
        <title>50 million years of genomic stasis in endosymbiotic bacteria.</title>
        <authorList>
            <person name="Tamas I."/>
            <person name="Klasson L."/>
            <person name="Canbaeck B."/>
            <person name="Naeslund A.K."/>
            <person name="Eriksson A.-S."/>
            <person name="Wernegreen J.J."/>
            <person name="Sandstroem J.P."/>
            <person name="Moran N.A."/>
            <person name="Andersson S.G.E."/>
        </authorList>
    </citation>
    <scope>NUCLEOTIDE SEQUENCE [LARGE SCALE GENOMIC DNA]</scope>
    <source>
        <strain>Sg</strain>
    </source>
</reference>
<keyword id="KW-0997">Cell inner membrane</keyword>
<keyword id="KW-1003">Cell membrane</keyword>
<keyword id="KW-0249">Electron transport</keyword>
<keyword id="KW-0285">Flavoprotein</keyword>
<keyword id="KW-0288">FMN</keyword>
<keyword id="KW-0472">Membrane</keyword>
<keyword id="KW-0597">Phosphoprotein</keyword>
<keyword id="KW-1278">Translocase</keyword>
<keyword id="KW-0812">Transmembrane</keyword>
<keyword id="KW-1133">Transmembrane helix</keyword>
<keyword id="KW-0813">Transport</keyword>